<feature type="chain" id="PRO_0000411876" description="Probable Xaa-Pro aminopeptidase pepP">
    <location>
        <begin position="1"/>
        <end position="462"/>
    </location>
</feature>
<feature type="binding site" evidence="1">
    <location>
        <position position="259"/>
    </location>
    <ligand>
        <name>Mn(2+)</name>
        <dbReference type="ChEBI" id="CHEBI:29035"/>
        <label>2</label>
    </ligand>
</feature>
<feature type="binding site" evidence="1">
    <location>
        <position position="270"/>
    </location>
    <ligand>
        <name>Mn(2+)</name>
        <dbReference type="ChEBI" id="CHEBI:29035"/>
        <label>1</label>
    </ligand>
</feature>
<feature type="binding site" evidence="1">
    <location>
        <position position="270"/>
    </location>
    <ligand>
        <name>Mn(2+)</name>
        <dbReference type="ChEBI" id="CHEBI:29035"/>
        <label>2</label>
    </ligand>
</feature>
<feature type="binding site" evidence="1">
    <location>
        <position position="393"/>
    </location>
    <ligand>
        <name>Mn(2+)</name>
        <dbReference type="ChEBI" id="CHEBI:29035"/>
        <label>1</label>
    </ligand>
</feature>
<feature type="binding site" evidence="1">
    <location>
        <position position="433"/>
    </location>
    <ligand>
        <name>Mn(2+)</name>
        <dbReference type="ChEBI" id="CHEBI:29035"/>
        <label>1</label>
    </ligand>
</feature>
<feature type="binding site" evidence="1">
    <location>
        <position position="433"/>
    </location>
    <ligand>
        <name>Mn(2+)</name>
        <dbReference type="ChEBI" id="CHEBI:29035"/>
        <label>2</label>
    </ligand>
</feature>
<keyword id="KW-0031">Aminopeptidase</keyword>
<keyword id="KW-0378">Hydrolase</keyword>
<keyword id="KW-0464">Manganese</keyword>
<keyword id="KW-0479">Metal-binding</keyword>
<keyword id="KW-0482">Metalloprotease</keyword>
<keyword id="KW-0645">Protease</keyword>
<dbReference type="EC" id="3.4.11.9"/>
<dbReference type="EMBL" id="ADNJ02000003">
    <property type="protein sequence ID" value="EFZ03414.1"/>
    <property type="molecule type" value="Genomic_DNA"/>
</dbReference>
<dbReference type="RefSeq" id="XP_007816677.1">
    <property type="nucleotide sequence ID" value="XM_007818486.1"/>
</dbReference>
<dbReference type="SMR" id="E9EK74"/>
<dbReference type="GeneID" id="19254774"/>
<dbReference type="KEGG" id="maj:MAA_00488"/>
<dbReference type="HOGENOM" id="CLU_017266_1_2_1"/>
<dbReference type="OrthoDB" id="10261878at2759"/>
<dbReference type="Proteomes" id="UP000002498">
    <property type="component" value="Unassembled WGS sequence"/>
</dbReference>
<dbReference type="GO" id="GO:0030145">
    <property type="term" value="F:manganese ion binding"/>
    <property type="evidence" value="ECO:0007669"/>
    <property type="project" value="InterPro"/>
</dbReference>
<dbReference type="GO" id="GO:0070006">
    <property type="term" value="F:metalloaminopeptidase activity"/>
    <property type="evidence" value="ECO:0007669"/>
    <property type="project" value="InterPro"/>
</dbReference>
<dbReference type="GO" id="GO:0006508">
    <property type="term" value="P:proteolysis"/>
    <property type="evidence" value="ECO:0007669"/>
    <property type="project" value="UniProtKB-KW"/>
</dbReference>
<dbReference type="CDD" id="cd01087">
    <property type="entry name" value="Prolidase"/>
    <property type="match status" value="1"/>
</dbReference>
<dbReference type="Gene3D" id="3.90.230.10">
    <property type="entry name" value="Creatinase/methionine aminopeptidase superfamily"/>
    <property type="match status" value="1"/>
</dbReference>
<dbReference type="Gene3D" id="3.40.350.10">
    <property type="entry name" value="Creatinase/prolidase N-terminal domain"/>
    <property type="match status" value="1"/>
</dbReference>
<dbReference type="InterPro" id="IPR007865">
    <property type="entry name" value="Aminopep_P_N"/>
</dbReference>
<dbReference type="InterPro" id="IPR029149">
    <property type="entry name" value="Creatin/AminoP/Spt16_N"/>
</dbReference>
<dbReference type="InterPro" id="IPR036005">
    <property type="entry name" value="Creatinase/aminopeptidase-like"/>
</dbReference>
<dbReference type="InterPro" id="IPR000994">
    <property type="entry name" value="Pept_M24"/>
</dbReference>
<dbReference type="InterPro" id="IPR052433">
    <property type="entry name" value="X-Pro_dipept-like"/>
</dbReference>
<dbReference type="PANTHER" id="PTHR43226">
    <property type="entry name" value="XAA-PRO AMINOPEPTIDASE 3"/>
    <property type="match status" value="1"/>
</dbReference>
<dbReference type="PANTHER" id="PTHR43226:SF1">
    <property type="entry name" value="XAA-PRO DIPEPTIDASE"/>
    <property type="match status" value="1"/>
</dbReference>
<dbReference type="Pfam" id="PF05195">
    <property type="entry name" value="AMP_N"/>
    <property type="match status" value="1"/>
</dbReference>
<dbReference type="Pfam" id="PF00557">
    <property type="entry name" value="Peptidase_M24"/>
    <property type="match status" value="1"/>
</dbReference>
<dbReference type="SMART" id="SM01011">
    <property type="entry name" value="AMP_N"/>
    <property type="match status" value="1"/>
</dbReference>
<dbReference type="SUPFAM" id="SSF55920">
    <property type="entry name" value="Creatinase/aminopeptidase"/>
    <property type="match status" value="1"/>
</dbReference>
<dbReference type="SUPFAM" id="SSF53092">
    <property type="entry name" value="Creatinase/prolidase N-terminal domain"/>
    <property type="match status" value="1"/>
</dbReference>
<protein>
    <recommendedName>
        <fullName>Probable Xaa-Pro aminopeptidase pepP</fullName>
        <ecNumber>3.4.11.9</ecNumber>
    </recommendedName>
    <alternativeName>
        <fullName>Aminoacylproline aminopeptidase</fullName>
    </alternativeName>
    <alternativeName>
        <fullName>Prolidase</fullName>
    </alternativeName>
</protein>
<proteinExistence type="inferred from homology"/>
<comment type="function">
    <text evidence="1">Catalyzes the removal of a penultimate prolyl residue from the N-termini of peptides.</text>
</comment>
<comment type="catalytic activity">
    <reaction>
        <text>Release of any N-terminal amino acid, including proline, that is linked to proline, even from a dipeptide or tripeptide.</text>
        <dbReference type="EC" id="3.4.11.9"/>
    </reaction>
</comment>
<comment type="cofactor">
    <cofactor evidence="1">
        <name>Mn(2+)</name>
        <dbReference type="ChEBI" id="CHEBI:29035"/>
    </cofactor>
    <text evidence="1">Binds 2 manganese ions per subunit.</text>
</comment>
<comment type="similarity">
    <text evidence="2">Belongs to the peptidase M24B family.</text>
</comment>
<reference key="1">
    <citation type="journal article" date="2011" name="PLoS Genet.">
        <title>Genome sequencing and comparative transcriptomics of the model entomopathogenic fungi Metarhizium anisopliae and M. acridum.</title>
        <authorList>
            <person name="Gao Q."/>
            <person name="Jin K."/>
            <person name="Ying S.-H."/>
            <person name="Zhang Y."/>
            <person name="Xiao G."/>
            <person name="Shang Y."/>
            <person name="Duan Z."/>
            <person name="Hu X."/>
            <person name="Xie X.-Q."/>
            <person name="Zhou G."/>
            <person name="Peng G."/>
            <person name="Luo Z."/>
            <person name="Huang W."/>
            <person name="Wang B."/>
            <person name="Fang W."/>
            <person name="Wang S."/>
            <person name="Zhong Y."/>
            <person name="Ma L.-J."/>
            <person name="St Leger R.J."/>
            <person name="Zhao G.-P."/>
            <person name="Pei Y."/>
            <person name="Feng M.-G."/>
            <person name="Xia Y."/>
            <person name="Wang C."/>
        </authorList>
    </citation>
    <scope>NUCLEOTIDE SEQUENCE [LARGE SCALE GENOMIC DNA]</scope>
    <source>
        <strain>ARSEF 23 / ATCC MYA-3075</strain>
    </source>
</reference>
<reference key="2">
    <citation type="journal article" date="2014" name="Proc. Natl. Acad. Sci. U.S.A.">
        <title>Trajectory and genomic determinants of fungal-pathogen speciation and host adaptation.</title>
        <authorList>
            <person name="Hu X."/>
            <person name="Xiao G."/>
            <person name="Zheng P."/>
            <person name="Shang Y."/>
            <person name="Su Y."/>
            <person name="Zhang X."/>
            <person name="Liu X."/>
            <person name="Zhan S."/>
            <person name="St Leger R.J."/>
            <person name="Wang C."/>
        </authorList>
    </citation>
    <scope>GENOME REANNOTATION</scope>
    <source>
        <strain>ARSEF 23 / ATCC MYA-3075</strain>
    </source>
</reference>
<gene>
    <name type="primary">pepP</name>
    <name type="ORF">MAA_00488</name>
</gene>
<organism>
    <name type="scientific">Metarhizium robertsii (strain ARSEF 23 / ATCC MYA-3075)</name>
    <name type="common">Metarhizium anisopliae (strain ARSEF 23)</name>
    <dbReference type="NCBI Taxonomy" id="655844"/>
    <lineage>
        <taxon>Eukaryota</taxon>
        <taxon>Fungi</taxon>
        <taxon>Dikarya</taxon>
        <taxon>Ascomycota</taxon>
        <taxon>Pezizomycotina</taxon>
        <taxon>Sordariomycetes</taxon>
        <taxon>Hypocreomycetidae</taxon>
        <taxon>Hypocreales</taxon>
        <taxon>Clavicipitaceae</taxon>
        <taxon>Metarhizium</taxon>
    </lineage>
</organism>
<evidence type="ECO:0000250" key="1"/>
<evidence type="ECO:0000305" key="2"/>
<sequence length="462" mass="51410">MAVEDFEAVLKAKYPGKAHAKRVVDLIRKTKPDANGVIYLEGRMTKLLEDNDSPEHFRQRRYFYYLTGCNLADCSFAYDIQSSKSILFIPPIDPDDVIWSGLPLSIDEALSRYDVDEVKFTTEVNSTLAHLAKQSPNSTVFAIANQVSDSVTFLEFGSKDFETVKKAIEVSRVVKDEFEVAMIRKANHISSLAHKAVIERSKAAATEQELYATFLERCVSHAAPEMAYHPILAAGKAAATLHYVDNNAPLKGKQNLLIDAGCEWNNYASDITRTFPLTGTFTKESRDIYDIVLRMQKECTELIKGGMLWDDLHLHAHKVAIDGLLALGILKGDAKEILNARTSAAFFPHGLGHHLGMDTHDTGGNPNPNDPDKLFRYLRLRGHVPAGAVVTVEPGIYFCDFIIKPYLDDHVHSKYIDAAVLNKYWDVGGVRIEDNIHVTENGYVNLTTAIKEVSDVEAVSAK</sequence>
<accession>E9EK74</accession>
<name>AMPP3_METRA</name>